<organism>
    <name type="scientific">Dictyostelium discoideum</name>
    <name type="common">Social amoeba</name>
    <dbReference type="NCBI Taxonomy" id="44689"/>
    <lineage>
        <taxon>Eukaryota</taxon>
        <taxon>Amoebozoa</taxon>
        <taxon>Evosea</taxon>
        <taxon>Eumycetozoa</taxon>
        <taxon>Dictyostelia</taxon>
        <taxon>Dictyosteliales</taxon>
        <taxon>Dictyosteliaceae</taxon>
        <taxon>Dictyostelium</taxon>
    </lineage>
</organism>
<evidence type="ECO:0000250" key="1">
    <source>
        <dbReference type="UniProtKB" id="Q9Y3C8"/>
    </source>
</evidence>
<evidence type="ECO:0000305" key="2"/>
<proteinExistence type="inferred from homology"/>
<name>UFC1_DICDI</name>
<feature type="chain" id="PRO_0000327781" description="Ubiquitin-fold modifier-conjugating enzyme 1">
    <location>
        <begin position="1"/>
        <end position="164"/>
    </location>
</feature>
<feature type="active site" description="Glycyl thioester intermediate" evidence="1">
    <location>
        <position position="115"/>
    </location>
</feature>
<gene>
    <name type="primary">ufc1</name>
    <name type="ORF">DDB_G0289037</name>
</gene>
<comment type="function">
    <text evidence="1">E2-like enzyme which forms an intermediate with ufm1 via a thioester linkage.</text>
</comment>
<comment type="similarity">
    <text evidence="2">Belongs to the ubiquitin-conjugating enzyme family. UFC1 subfamily.</text>
</comment>
<keyword id="KW-1185">Reference proteome</keyword>
<keyword id="KW-0833">Ubl conjugation pathway</keyword>
<accession>Q1ZXC9</accession>
<sequence length="164" mass="19065">MDNHTKQTVQQIPLLTVKAGPRDGDKWIDRLKEEYQALIKYVEINKKADNDWFNIESNPLGTRWQGKCWYIYNFKKYEFDLEFDMPVTYPETAPEIAIPELDGKTEKMYRGGKICLTIHFKPLWSRNVPHFGIAHALALGLAPWLAAEVPHLVDNGIIKHKEDK</sequence>
<protein>
    <recommendedName>
        <fullName>Ubiquitin-fold modifier-conjugating enzyme 1</fullName>
        <shortName>Ufm1-conjugating enzyme 1</shortName>
    </recommendedName>
</protein>
<dbReference type="EMBL" id="AAFI02000129">
    <property type="protein sequence ID" value="EAS66834.1"/>
    <property type="molecule type" value="Genomic_DNA"/>
</dbReference>
<dbReference type="RefSeq" id="XP_001134517.1">
    <property type="nucleotide sequence ID" value="XM_001134517.1"/>
</dbReference>
<dbReference type="SMR" id="Q1ZXC9"/>
<dbReference type="FunCoup" id="Q1ZXC9">
    <property type="interactions" value="514"/>
</dbReference>
<dbReference type="STRING" id="44689.Q1ZXC9"/>
<dbReference type="PaxDb" id="44689-DDB0232141"/>
<dbReference type="EnsemblProtists" id="EAS66834">
    <property type="protein sequence ID" value="EAS66834"/>
    <property type="gene ID" value="DDB_G0289037"/>
</dbReference>
<dbReference type="GeneID" id="8626932"/>
<dbReference type="KEGG" id="ddi:DDB_G0289037"/>
<dbReference type="dictyBase" id="DDB_G0289037">
    <property type="gene designation" value="ufc1"/>
</dbReference>
<dbReference type="VEuPathDB" id="AmoebaDB:DDB_G0289037"/>
<dbReference type="eggNOG" id="KOG3357">
    <property type="taxonomic scope" value="Eukaryota"/>
</dbReference>
<dbReference type="HOGENOM" id="CLU_101170_0_0_1"/>
<dbReference type="InParanoid" id="Q1ZXC9"/>
<dbReference type="OMA" id="LWQKNVP"/>
<dbReference type="PhylomeDB" id="Q1ZXC9"/>
<dbReference type="PRO" id="PR:Q1ZXC9"/>
<dbReference type="Proteomes" id="UP000002195">
    <property type="component" value="Chromosome 5"/>
</dbReference>
<dbReference type="GO" id="GO:0061657">
    <property type="term" value="F:UFM1 conjugating enzyme activity"/>
    <property type="evidence" value="ECO:0007669"/>
    <property type="project" value="InterPro"/>
</dbReference>
<dbReference type="GO" id="GO:0071568">
    <property type="term" value="F:UFM1 transferase activity"/>
    <property type="evidence" value="ECO:0000318"/>
    <property type="project" value="GO_Central"/>
</dbReference>
<dbReference type="GO" id="GO:0071569">
    <property type="term" value="P:protein ufmylation"/>
    <property type="evidence" value="ECO:0007669"/>
    <property type="project" value="InterPro"/>
</dbReference>
<dbReference type="GO" id="GO:0034976">
    <property type="term" value="P:response to endoplasmic reticulum stress"/>
    <property type="evidence" value="ECO:0000318"/>
    <property type="project" value="GO_Central"/>
</dbReference>
<dbReference type="GO" id="GO:0061709">
    <property type="term" value="P:reticulophagy"/>
    <property type="evidence" value="ECO:0000318"/>
    <property type="project" value="GO_Central"/>
</dbReference>
<dbReference type="CDD" id="cd11686">
    <property type="entry name" value="UBCc_UFC1"/>
    <property type="match status" value="1"/>
</dbReference>
<dbReference type="FunFam" id="3.10.110.10:FF:000215">
    <property type="entry name" value="Ubiquitin-fold modifier-conjugating enzyme 1"/>
    <property type="match status" value="1"/>
</dbReference>
<dbReference type="Gene3D" id="3.10.110.10">
    <property type="entry name" value="Ubiquitin Conjugating Enzyme"/>
    <property type="match status" value="1"/>
</dbReference>
<dbReference type="InterPro" id="IPR016135">
    <property type="entry name" value="UBQ-conjugating_enzyme/RWD"/>
</dbReference>
<dbReference type="InterPro" id="IPR014806">
    <property type="entry name" value="Ufc1"/>
</dbReference>
<dbReference type="PANTHER" id="PTHR12921">
    <property type="entry name" value="UBIQUITIN-FOLD MODIFIER-CONJUGATING ENZYME 1"/>
    <property type="match status" value="1"/>
</dbReference>
<dbReference type="PANTHER" id="PTHR12921:SF0">
    <property type="entry name" value="UBIQUITIN-FOLD MODIFIER-CONJUGATING ENZYME 1"/>
    <property type="match status" value="1"/>
</dbReference>
<dbReference type="Pfam" id="PF08694">
    <property type="entry name" value="UFC1"/>
    <property type="match status" value="1"/>
</dbReference>
<dbReference type="PIRSF" id="PIRSF008716">
    <property type="entry name" value="DUF1782"/>
    <property type="match status" value="1"/>
</dbReference>
<dbReference type="SUPFAM" id="SSF54495">
    <property type="entry name" value="UBC-like"/>
    <property type="match status" value="1"/>
</dbReference>
<reference key="1">
    <citation type="journal article" date="2005" name="Nature">
        <title>The genome of the social amoeba Dictyostelium discoideum.</title>
        <authorList>
            <person name="Eichinger L."/>
            <person name="Pachebat J.A."/>
            <person name="Gloeckner G."/>
            <person name="Rajandream M.A."/>
            <person name="Sucgang R."/>
            <person name="Berriman M."/>
            <person name="Song J."/>
            <person name="Olsen R."/>
            <person name="Szafranski K."/>
            <person name="Xu Q."/>
            <person name="Tunggal B."/>
            <person name="Kummerfeld S."/>
            <person name="Madera M."/>
            <person name="Konfortov B.A."/>
            <person name="Rivero F."/>
            <person name="Bankier A.T."/>
            <person name="Lehmann R."/>
            <person name="Hamlin N."/>
            <person name="Davies R."/>
            <person name="Gaudet P."/>
            <person name="Fey P."/>
            <person name="Pilcher K."/>
            <person name="Chen G."/>
            <person name="Saunders D."/>
            <person name="Sodergren E.J."/>
            <person name="Davis P."/>
            <person name="Kerhornou A."/>
            <person name="Nie X."/>
            <person name="Hall N."/>
            <person name="Anjard C."/>
            <person name="Hemphill L."/>
            <person name="Bason N."/>
            <person name="Farbrother P."/>
            <person name="Desany B."/>
            <person name="Just E."/>
            <person name="Morio T."/>
            <person name="Rost R."/>
            <person name="Churcher C.M."/>
            <person name="Cooper J."/>
            <person name="Haydock S."/>
            <person name="van Driessche N."/>
            <person name="Cronin A."/>
            <person name="Goodhead I."/>
            <person name="Muzny D.M."/>
            <person name="Mourier T."/>
            <person name="Pain A."/>
            <person name="Lu M."/>
            <person name="Harper D."/>
            <person name="Lindsay R."/>
            <person name="Hauser H."/>
            <person name="James K.D."/>
            <person name="Quiles M."/>
            <person name="Madan Babu M."/>
            <person name="Saito T."/>
            <person name="Buchrieser C."/>
            <person name="Wardroper A."/>
            <person name="Felder M."/>
            <person name="Thangavelu M."/>
            <person name="Johnson D."/>
            <person name="Knights A."/>
            <person name="Loulseged H."/>
            <person name="Mungall K.L."/>
            <person name="Oliver K."/>
            <person name="Price C."/>
            <person name="Quail M.A."/>
            <person name="Urushihara H."/>
            <person name="Hernandez J."/>
            <person name="Rabbinowitsch E."/>
            <person name="Steffen D."/>
            <person name="Sanders M."/>
            <person name="Ma J."/>
            <person name="Kohara Y."/>
            <person name="Sharp S."/>
            <person name="Simmonds M.N."/>
            <person name="Spiegler S."/>
            <person name="Tivey A."/>
            <person name="Sugano S."/>
            <person name="White B."/>
            <person name="Walker D."/>
            <person name="Woodward J.R."/>
            <person name="Winckler T."/>
            <person name="Tanaka Y."/>
            <person name="Shaulsky G."/>
            <person name="Schleicher M."/>
            <person name="Weinstock G.M."/>
            <person name="Rosenthal A."/>
            <person name="Cox E.C."/>
            <person name="Chisholm R.L."/>
            <person name="Gibbs R.A."/>
            <person name="Loomis W.F."/>
            <person name="Platzer M."/>
            <person name="Kay R.R."/>
            <person name="Williams J.G."/>
            <person name="Dear P.H."/>
            <person name="Noegel A.A."/>
            <person name="Barrell B.G."/>
            <person name="Kuspa A."/>
        </authorList>
    </citation>
    <scope>NUCLEOTIDE SEQUENCE [LARGE SCALE GENOMIC DNA]</scope>
    <source>
        <strain>AX4</strain>
    </source>
</reference>